<sequence>MTTIIIDSTVDLYYDHDEQLKKIRLKEPFYFKIPSGLEVQIGQNKFIIVEELHIEPDVNTLLSNVCEKGIIQEIPSDTSIIPECYGFSTRLESPLKVYLPLDTKVKLPVGTKLKQKEIYAFFNLETEVDGIIFSSVIPSILVDRLNVKIDIEGNTVNNEYLMNIPLYEKHEDLLIDFEEKTSPNNKSRNKSRNESQDKSRDKSRKKVCNTHKNKKTLDNVKPDKNIKISVSSNKFTTNKPKSNKNSSDSDGSTKTTKSTRSTKSTKSSKSQKSTRNSDVKLIELSDSNQYSEDIPLVRKKKNKNPKESINHKKNDSKQNIFVEKFKNKNNKNDSTNCRKSNRTTTRDVTNSDSEQKVENKNRSWLSESISSESDKSDSEQSDLTEDETEENVSEEDETEEDETACYIDNKDYRKLLSKLSQYLEPKYDIVKIANYIWVNWDLKKINKMGVKDVLSLFLEGNNNRLNESDFYLKNYKLFDSDDTDDTDDTNNSCSSEVDDSD</sequence>
<organism>
    <name type="scientific">Acanthamoeba polyphaga mimivirus</name>
    <name type="common">APMV</name>
    <dbReference type="NCBI Taxonomy" id="212035"/>
    <lineage>
        <taxon>Viruses</taxon>
        <taxon>Varidnaviria</taxon>
        <taxon>Bamfordvirae</taxon>
        <taxon>Nucleocytoviricota</taxon>
        <taxon>Megaviricetes</taxon>
        <taxon>Imitervirales</taxon>
        <taxon>Mimiviridae</taxon>
        <taxon>Megamimivirinae</taxon>
        <taxon>Mimivirus</taxon>
        <taxon>Mimivirus bradfordmassiliense</taxon>
    </lineage>
</organism>
<organismHost>
    <name type="scientific">Acanthamoeba polyphaga</name>
    <name type="common">Amoeba</name>
    <dbReference type="NCBI Taxonomy" id="5757"/>
</organismHost>
<keyword id="KW-1185">Reference proteome</keyword>
<gene>
    <name type="ordered locus">MIMI_L157</name>
</gene>
<protein>
    <recommendedName>
        <fullName>Uncharacterized protein L157</fullName>
    </recommendedName>
</protein>
<reference key="1">
    <citation type="journal article" date="2004" name="Science">
        <title>The 1.2-megabase genome sequence of Mimivirus.</title>
        <authorList>
            <person name="Raoult D."/>
            <person name="Audic S."/>
            <person name="Robert C."/>
            <person name="Abergel C."/>
            <person name="Renesto P."/>
            <person name="Ogata H."/>
            <person name="La Scola B."/>
            <person name="Susan M."/>
            <person name="Claverie J.-M."/>
        </authorList>
    </citation>
    <scope>NUCLEOTIDE SEQUENCE [LARGE SCALE GENOMIC DNA]</scope>
    <source>
        <strain>Rowbotham-Bradford</strain>
    </source>
</reference>
<accession>Q5UPM5</accession>
<feature type="chain" id="PRO_0000250624" description="Uncharacterized protein L157">
    <location>
        <begin position="1"/>
        <end position="501"/>
    </location>
</feature>
<feature type="region of interest" description="Disordered" evidence="1">
    <location>
        <begin position="179"/>
        <end position="404"/>
    </location>
</feature>
<feature type="region of interest" description="Disordered" evidence="1">
    <location>
        <begin position="480"/>
        <end position="501"/>
    </location>
</feature>
<feature type="compositionally biased region" description="Basic and acidic residues" evidence="1">
    <location>
        <begin position="191"/>
        <end position="200"/>
    </location>
</feature>
<feature type="compositionally biased region" description="Basic residues" evidence="1">
    <location>
        <begin position="201"/>
        <end position="214"/>
    </location>
</feature>
<feature type="compositionally biased region" description="Basic and acidic residues" evidence="1">
    <location>
        <begin position="215"/>
        <end position="226"/>
    </location>
</feature>
<feature type="compositionally biased region" description="Low complexity" evidence="1">
    <location>
        <begin position="231"/>
        <end position="274"/>
    </location>
</feature>
<feature type="compositionally biased region" description="Basic and acidic residues" evidence="1">
    <location>
        <begin position="304"/>
        <end position="316"/>
    </location>
</feature>
<feature type="compositionally biased region" description="Polar residues" evidence="1">
    <location>
        <begin position="333"/>
        <end position="352"/>
    </location>
</feature>
<feature type="compositionally biased region" description="Acidic residues" evidence="1">
    <location>
        <begin position="379"/>
        <end position="403"/>
    </location>
</feature>
<name>YL157_MIMIV</name>
<dbReference type="EMBL" id="AY653733">
    <property type="protein sequence ID" value="AAV50432.1"/>
    <property type="molecule type" value="Genomic_DNA"/>
</dbReference>
<dbReference type="KEGG" id="vg:9924757"/>
<dbReference type="Proteomes" id="UP000001134">
    <property type="component" value="Genome"/>
</dbReference>
<evidence type="ECO:0000256" key="1">
    <source>
        <dbReference type="SAM" id="MobiDB-lite"/>
    </source>
</evidence>
<proteinExistence type="predicted"/>